<protein>
    <recommendedName>
        <fullName>Cytochrome c oxidase subunit 5A, mitochondrial</fullName>
    </recommendedName>
    <alternativeName>
        <fullName>Cytochrome c oxidase polypeptide Va</fullName>
    </alternativeName>
</protein>
<organism>
    <name type="scientific">Gorilla gorilla gorilla</name>
    <name type="common">Western lowland gorilla</name>
    <dbReference type="NCBI Taxonomy" id="9595"/>
    <lineage>
        <taxon>Eukaryota</taxon>
        <taxon>Metazoa</taxon>
        <taxon>Chordata</taxon>
        <taxon>Craniata</taxon>
        <taxon>Vertebrata</taxon>
        <taxon>Euteleostomi</taxon>
        <taxon>Mammalia</taxon>
        <taxon>Eutheria</taxon>
        <taxon>Euarchontoglires</taxon>
        <taxon>Primates</taxon>
        <taxon>Haplorrhini</taxon>
        <taxon>Catarrhini</taxon>
        <taxon>Hominidae</taxon>
        <taxon>Gorilla</taxon>
    </lineage>
</organism>
<evidence type="ECO:0000250" key="1">
    <source>
        <dbReference type="UniProtKB" id="P00426"/>
    </source>
</evidence>
<evidence type="ECO:0000250" key="2">
    <source>
        <dbReference type="UniProtKB" id="P00427"/>
    </source>
</evidence>
<evidence type="ECO:0000250" key="3">
    <source>
        <dbReference type="UniProtKB" id="P12787"/>
    </source>
</evidence>
<evidence type="ECO:0000250" key="4">
    <source>
        <dbReference type="UniProtKB" id="P20674"/>
    </source>
</evidence>
<evidence type="ECO:0000305" key="5"/>
<feature type="transit peptide" description="Mitochondrion" evidence="1">
    <location>
        <begin position="1"/>
        <end position="41"/>
    </location>
</feature>
<feature type="chain" id="PRO_0000355981" description="Cytochrome c oxidase subunit 5A, mitochondrial">
    <location>
        <begin position="42"/>
        <end position="150"/>
    </location>
</feature>
<feature type="short sequence motif" description="SIFI-degron" evidence="4">
    <location>
        <begin position="2"/>
        <end position="17"/>
    </location>
</feature>
<feature type="modified residue" description="N6-acetyllysine" evidence="3">
    <location>
        <position position="87"/>
    </location>
</feature>
<feature type="modified residue" description="N6-acetyllysine" evidence="3">
    <location>
        <position position="113"/>
    </location>
</feature>
<feature type="modified residue" description="Phosphothreonine" evidence="4">
    <location>
        <position position="141"/>
    </location>
</feature>
<proteinExistence type="evidence at transcript level"/>
<dbReference type="EMBL" id="DQ987240">
    <property type="protein sequence ID" value="ABK92287.1"/>
    <property type="molecule type" value="mRNA"/>
</dbReference>
<dbReference type="RefSeq" id="NP_001266638.1">
    <property type="nucleotide sequence ID" value="NM_001279709.1"/>
</dbReference>
<dbReference type="SMR" id="B0VYX3"/>
<dbReference type="FunCoup" id="B0VYX3">
    <property type="interactions" value="1337"/>
</dbReference>
<dbReference type="STRING" id="9593.ENSGGOP00000029542"/>
<dbReference type="GeneID" id="101134792"/>
<dbReference type="CTD" id="9377"/>
<dbReference type="eggNOG" id="KOG4077">
    <property type="taxonomic scope" value="Eukaryota"/>
</dbReference>
<dbReference type="InParanoid" id="B0VYX3"/>
<dbReference type="UniPathway" id="UPA00705"/>
<dbReference type="Proteomes" id="UP000001519">
    <property type="component" value="Unplaced"/>
</dbReference>
<dbReference type="GO" id="GO:0005743">
    <property type="term" value="C:mitochondrial inner membrane"/>
    <property type="evidence" value="ECO:0007669"/>
    <property type="project" value="UniProtKB-SubCell"/>
</dbReference>
<dbReference type="GO" id="GO:0045277">
    <property type="term" value="C:respiratory chain complex IV"/>
    <property type="evidence" value="ECO:0000318"/>
    <property type="project" value="GO_Central"/>
</dbReference>
<dbReference type="GO" id="GO:0046872">
    <property type="term" value="F:metal ion binding"/>
    <property type="evidence" value="ECO:0007669"/>
    <property type="project" value="UniProtKB-KW"/>
</dbReference>
<dbReference type="GO" id="GO:0006123">
    <property type="term" value="P:mitochondrial electron transport, cytochrome c to oxygen"/>
    <property type="evidence" value="ECO:0000318"/>
    <property type="project" value="GO_Central"/>
</dbReference>
<dbReference type="CDD" id="cd00923">
    <property type="entry name" value="Cyt_c_Oxidase_Va"/>
    <property type="match status" value="1"/>
</dbReference>
<dbReference type="FunFam" id="1.25.40.40:FF:000002">
    <property type="entry name" value="cytochrome c oxidase subunit 5A, mitochondrial"/>
    <property type="match status" value="1"/>
</dbReference>
<dbReference type="Gene3D" id="1.25.40.40">
    <property type="entry name" value="Cytochrome c oxidase, subunit Va/VI"/>
    <property type="match status" value="1"/>
</dbReference>
<dbReference type="InterPro" id="IPR003204">
    <property type="entry name" value="Cyt_c_oxidase_su5A/6"/>
</dbReference>
<dbReference type="InterPro" id="IPR036545">
    <property type="entry name" value="Cyt_c_oxidase_su5A/6_sf"/>
</dbReference>
<dbReference type="PANTHER" id="PTHR14200">
    <property type="entry name" value="CYTOCHROME C OXIDASE POLYPEPTIDE"/>
    <property type="match status" value="1"/>
</dbReference>
<dbReference type="PANTHER" id="PTHR14200:SF16">
    <property type="entry name" value="CYTOCHROME C OXIDASE SUBUNIT 5A, MITOCHONDRIAL"/>
    <property type="match status" value="1"/>
</dbReference>
<dbReference type="Pfam" id="PF02284">
    <property type="entry name" value="COX5A"/>
    <property type="match status" value="1"/>
</dbReference>
<dbReference type="SUPFAM" id="SSF48479">
    <property type="entry name" value="Cytochrome c oxidase subunit E"/>
    <property type="match status" value="1"/>
</dbReference>
<sequence>MLGAALRRCAVAATTRAGPRGLLHSARTPGPAAAIQSVRCYSHGSQETDEEFDARWVTYFNKPDIDAWELRKGINTLVTYDMVPEPKIIDAALRACRRLNEFASTVRILEAVKDKAGPHKEIYPYVIQELRPTLNELGISTPEELGLDKV</sequence>
<reference key="1">
    <citation type="journal article" date="2008" name="BMC Evol. Biol.">
        <title>Molecular evolution of the cytochrome c oxidase subunit 5A gene in primates.</title>
        <authorList>
            <person name="Uddin M."/>
            <person name="Opazo J.C."/>
            <person name="Wildman D.E."/>
            <person name="Sherwood C.C."/>
            <person name="Hof P.R."/>
            <person name="Goodman M."/>
            <person name="Grossman L.I."/>
        </authorList>
    </citation>
    <scope>NUCLEOTIDE SEQUENCE [MRNA]</scope>
</reference>
<accession>B0VYX3</accession>
<gene>
    <name type="primary">COX5A</name>
</gene>
<comment type="function">
    <text evidence="2">Component of the cytochrome c oxidase, the last enzyme in the mitochondrial electron transport chain which drives oxidative phosphorylation. The respiratory chain contains 3 multisubunit complexes succinate dehydrogenase (complex II, CII), ubiquinol-cytochrome c oxidoreductase (cytochrome b-c1 complex, complex III, CIII) and cytochrome c oxidase (complex IV, CIV), that cooperate to transfer electrons derived from NADH and succinate to molecular oxygen, creating an electrochemical gradient over the inner membrane that drives transmembrane transport and the ATP synthase. Cytochrome c oxidase is the component of the respiratory chain that catalyzes the reduction of oxygen to water. Electrons originating from reduced cytochrome c in the intermembrane space (IMS) are transferred via the dinuclear copper A center (CU(A)) of subunit 2 and heme A of subunit 1 to the active site in subunit 1, a binuclear center (BNC) formed by heme A3 and copper B (CU(B)). The BNC reduces molecular oxygen to 2 water molecules using 4 electrons from cytochrome c in the IMS and 4 protons from the mitochondrial matrix.</text>
</comment>
<comment type="pathway">
    <text evidence="2">Energy metabolism; oxidative phosphorylation.</text>
</comment>
<comment type="subunit">
    <text evidence="1 4">Component of the cytochrome c oxidase (complex IV, CIV), a multisubunit enzyme composed of 14 subunits. The complex is composed of a catalytic core of 3 subunits MT-CO1, MT-CO2 and MT-CO3, encoded in the mitochondrial DNA, and 11 supernumerary subunits COX4I, COX5A, COX5B, COX6A, COX6B, COX6C, COX7A, COX7B, COX7C, COX8 and NDUFA4, which are encoded in the nuclear genome. The complex exists as a monomer or a dimer and forms supercomplexes (SCs) in the inner mitochondrial membrane with NADH-ubiquinone oxidoreductase (complex I, CI) and ubiquinol-cytochrome c oxidoreductase (cytochrome b-c1 complex, complex III, CIII), resulting in different assemblies (supercomplex SCI(1)III(2)IV(1) and megacomplex MCI(2)III(2)IV(2)) (By similarity). Interacts with AFG1L (By similarity). Interacts with RAB5IF (By similarity).</text>
</comment>
<comment type="subcellular location">
    <subcellularLocation>
        <location evidence="1">Mitochondrion inner membrane</location>
        <topology evidence="1">Peripheral membrane protein</topology>
        <orientation evidence="1">Matrix side</orientation>
    </subcellularLocation>
</comment>
<comment type="PTM">
    <text evidence="4">In response to mitochondrial stress, the precursor protein is ubiquitinated by the SIFI complex in the cytoplasm before mitochondrial import, leading to its degradation. Within the SIFI complex, UBR4 initiates ubiquitin chain that are further elongated or branched by KCMF1.</text>
</comment>
<comment type="similarity">
    <text evidence="5">Belongs to the cytochrome c oxidase subunit 5A family.</text>
</comment>
<keyword id="KW-0007">Acetylation</keyword>
<keyword id="KW-0349">Heme</keyword>
<keyword id="KW-0408">Iron</keyword>
<keyword id="KW-0472">Membrane</keyword>
<keyword id="KW-0479">Metal-binding</keyword>
<keyword id="KW-0496">Mitochondrion</keyword>
<keyword id="KW-0999">Mitochondrion inner membrane</keyword>
<keyword id="KW-0597">Phosphoprotein</keyword>
<keyword id="KW-1185">Reference proteome</keyword>
<keyword id="KW-0809">Transit peptide</keyword>
<keyword id="KW-0832">Ubl conjugation</keyword>
<name>COX5A_GORGO</name>